<sequence length="547" mass="61661">MKSIRYYLAFTAFIALYYVIPVNSRLLWQPDETRYAEISREMLASGDWIVPHFLGLRYFEKPIAGYWINSLGQWLFGATNFGVRAGAILTTLLAAALVAWLTFRLWRDKRTALLASVIFLSLFAVYSIGTYAVLDPMIALWLTAGMCCFWQGMQATTRTGKIGMFLLLGATCGLGVLTKGFLALAVPVVSVLPWVIVQKRWKDFLLYGWLAVLSCFVVVLPWAIAIARREADFWHYFFWVEHIQRFAMSDAQHKAPFWYYLPVLLAGSLPWLGLLPGALKLGWRERNGAFYLLGWTIMPLLFFSIAKGKLPTYVLSCFAPIAILMARFVLHNVKEGVAALRVNGGINLVFGIIGIVAAFVVSSWGPLKSPVWTHIETYKVFCVWGVFTVWAFVGWYSLCHSPKYLLPAFCPLGLALLFGFSVPDRVMESKQPQFFVEMTQAPLASSRYILADSVGVAAGLAWSLKRDDIMLYGHAGELRYGLSYPDVQNKFVKADDFNAWLNQHRQEGIITLVLSIDKDEDISALSLPPADNVDYQGRLVLIQYRPK</sequence>
<evidence type="ECO:0000255" key="1">
    <source>
        <dbReference type="HAMAP-Rule" id="MF_01165"/>
    </source>
</evidence>
<evidence type="ECO:0000305" key="2"/>
<reference key="1">
    <citation type="journal article" date="2004" name="Nat. Genet.">
        <title>Comparison of genome degradation in Paratyphi A and Typhi, human-restricted serovars of Salmonella enterica that cause typhoid.</title>
        <authorList>
            <person name="McClelland M."/>
            <person name="Sanderson K.E."/>
            <person name="Clifton S.W."/>
            <person name="Latreille P."/>
            <person name="Porwollik S."/>
            <person name="Sabo A."/>
            <person name="Meyer R."/>
            <person name="Bieri T."/>
            <person name="Ozersky P."/>
            <person name="McLellan M."/>
            <person name="Harkins C.R."/>
            <person name="Wang C."/>
            <person name="Nguyen C."/>
            <person name="Berghoff A."/>
            <person name="Elliott G."/>
            <person name="Kohlberg S."/>
            <person name="Strong C."/>
            <person name="Du F."/>
            <person name="Carter J."/>
            <person name="Kremizki C."/>
            <person name="Layman D."/>
            <person name="Leonard S."/>
            <person name="Sun H."/>
            <person name="Fulton L."/>
            <person name="Nash W."/>
            <person name="Miner T."/>
            <person name="Minx P."/>
            <person name="Delehaunty K."/>
            <person name="Fronick C."/>
            <person name="Magrini V."/>
            <person name="Nhan M."/>
            <person name="Warren W."/>
            <person name="Florea L."/>
            <person name="Spieth J."/>
            <person name="Wilson R.K."/>
        </authorList>
    </citation>
    <scope>NUCLEOTIDE SEQUENCE [LARGE SCALE GENOMIC DNA]</scope>
    <source>
        <strain>ATCC 9150 / SARB42</strain>
    </source>
</reference>
<organism>
    <name type="scientific">Salmonella paratyphi A (strain ATCC 9150 / SARB42)</name>
    <dbReference type="NCBI Taxonomy" id="295319"/>
    <lineage>
        <taxon>Bacteria</taxon>
        <taxon>Pseudomonadati</taxon>
        <taxon>Pseudomonadota</taxon>
        <taxon>Gammaproteobacteria</taxon>
        <taxon>Enterobacterales</taxon>
        <taxon>Enterobacteriaceae</taxon>
        <taxon>Salmonella</taxon>
    </lineage>
</organism>
<feature type="chain" id="PRO_0000121510" description="Undecaprenyl phosphate-alpha-4-amino-4-deoxy-L-arabinose arabinosyl transferase">
    <location>
        <begin position="1"/>
        <end position="547"/>
    </location>
</feature>
<feature type="transmembrane region" description="Helical" evidence="1">
    <location>
        <begin position="8"/>
        <end position="28"/>
    </location>
</feature>
<feature type="transmembrane region" description="Helical" evidence="1">
    <location>
        <begin position="81"/>
        <end position="101"/>
    </location>
</feature>
<feature type="transmembrane region" description="Helical" evidence="1">
    <location>
        <begin position="113"/>
        <end position="133"/>
    </location>
</feature>
<feature type="transmembrane region" description="Helical" evidence="1">
    <location>
        <begin position="136"/>
        <end position="156"/>
    </location>
</feature>
<feature type="transmembrane region" description="Helical" evidence="1">
    <location>
        <begin position="162"/>
        <end position="184"/>
    </location>
</feature>
<feature type="transmembrane region" description="Helical" evidence="1">
    <location>
        <begin position="204"/>
        <end position="224"/>
    </location>
</feature>
<feature type="transmembrane region" description="Helical" evidence="1">
    <location>
        <begin position="255"/>
        <end position="275"/>
    </location>
</feature>
<feature type="transmembrane region" description="Helical" evidence="1">
    <location>
        <begin position="288"/>
        <end position="308"/>
    </location>
</feature>
<feature type="transmembrane region" description="Helical" evidence="1">
    <location>
        <begin position="310"/>
        <end position="330"/>
    </location>
</feature>
<feature type="transmembrane region" description="Helical" evidence="1">
    <location>
        <begin position="344"/>
        <end position="364"/>
    </location>
</feature>
<feature type="transmembrane region" description="Helical" evidence="1">
    <location>
        <begin position="380"/>
        <end position="400"/>
    </location>
</feature>
<feature type="transmembrane region" description="Helical" evidence="1">
    <location>
        <begin position="404"/>
        <end position="424"/>
    </location>
</feature>
<gene>
    <name evidence="1" type="primary">arnT</name>
    <name type="ordered locus">SPA0562</name>
</gene>
<keyword id="KW-0997">Cell inner membrane</keyword>
<keyword id="KW-1003">Cell membrane</keyword>
<keyword id="KW-0328">Glycosyltransferase</keyword>
<keyword id="KW-0441">Lipid A biosynthesis</keyword>
<keyword id="KW-0444">Lipid biosynthesis</keyword>
<keyword id="KW-0443">Lipid metabolism</keyword>
<keyword id="KW-0448">Lipopolysaccharide biosynthesis</keyword>
<keyword id="KW-0472">Membrane</keyword>
<keyword id="KW-0808">Transferase</keyword>
<keyword id="KW-0812">Transmembrane</keyword>
<keyword id="KW-1133">Transmembrane helix</keyword>
<comment type="function">
    <text evidence="1">Catalyzes the transfer of the L-Ara4N moiety of the glycolipid undecaprenyl phosphate-alpha-L-Ara4N to lipid A. The modified arabinose is attached to lipid A and is required for resistance to polymyxin and cationic antimicrobial peptides.</text>
</comment>
<comment type="catalytic activity">
    <reaction evidence="1">
        <text>4-amino-4-deoxy-alpha-L-arabinopyranosyl di-trans,octa-cis-undecaprenyl phosphate + lipid IVA = lipid IIA + di-trans,octa-cis-undecaprenyl phosphate.</text>
        <dbReference type="EC" id="2.4.2.43"/>
    </reaction>
</comment>
<comment type="pathway">
    <text evidence="1">Lipopolysaccharide metabolism; 4-amino-4-deoxy-beta-L-arabinose-lipid A biosynthesis.</text>
</comment>
<comment type="subcellular location">
    <subcellularLocation>
        <location evidence="1">Cell inner membrane</location>
        <topology evidence="1">Multi-pass membrane protein</topology>
    </subcellularLocation>
</comment>
<comment type="similarity">
    <text evidence="1">Belongs to the glycosyltransferase 83 family.</text>
</comment>
<comment type="sequence caution" evidence="2">
    <conflict type="erroneous initiation">
        <sequence resource="EMBL-CDS" id="AAV76564"/>
    </conflict>
</comment>
<accession>Q5PNA8</accession>
<dbReference type="EC" id="2.4.2.43" evidence="1"/>
<dbReference type="EMBL" id="CP000026">
    <property type="protein sequence ID" value="AAV76564.1"/>
    <property type="status" value="ALT_INIT"/>
    <property type="molecule type" value="Genomic_DNA"/>
</dbReference>
<dbReference type="SMR" id="Q5PNA8"/>
<dbReference type="CAZy" id="GT83">
    <property type="family name" value="Glycosyltransferase Family 83"/>
</dbReference>
<dbReference type="KEGG" id="spt:SPA0562"/>
<dbReference type="HOGENOM" id="CLU_019200_2_1_6"/>
<dbReference type="UniPathway" id="UPA00037"/>
<dbReference type="Proteomes" id="UP000008185">
    <property type="component" value="Chromosome"/>
</dbReference>
<dbReference type="GO" id="GO:0005886">
    <property type="term" value="C:plasma membrane"/>
    <property type="evidence" value="ECO:0007669"/>
    <property type="project" value="UniProtKB-SubCell"/>
</dbReference>
<dbReference type="GO" id="GO:0103015">
    <property type="term" value="F:4-amino-4-deoxy-L-arabinose transferase activity"/>
    <property type="evidence" value="ECO:0007669"/>
    <property type="project" value="UniProtKB-EC"/>
</dbReference>
<dbReference type="GO" id="GO:0000030">
    <property type="term" value="F:mannosyltransferase activity"/>
    <property type="evidence" value="ECO:0007669"/>
    <property type="project" value="InterPro"/>
</dbReference>
<dbReference type="GO" id="GO:0009245">
    <property type="term" value="P:lipid A biosynthetic process"/>
    <property type="evidence" value="ECO:0007669"/>
    <property type="project" value="UniProtKB-UniRule"/>
</dbReference>
<dbReference type="GO" id="GO:0009103">
    <property type="term" value="P:lipopolysaccharide biosynthetic process"/>
    <property type="evidence" value="ECO:0007669"/>
    <property type="project" value="UniProtKB-KW"/>
</dbReference>
<dbReference type="GO" id="GO:0006493">
    <property type="term" value="P:protein O-linked glycosylation"/>
    <property type="evidence" value="ECO:0007669"/>
    <property type="project" value="InterPro"/>
</dbReference>
<dbReference type="GO" id="GO:0010041">
    <property type="term" value="P:response to iron(III) ion"/>
    <property type="evidence" value="ECO:0007669"/>
    <property type="project" value="TreeGrafter"/>
</dbReference>
<dbReference type="HAMAP" id="MF_01165">
    <property type="entry name" value="ArnT_transfer"/>
    <property type="match status" value="1"/>
</dbReference>
<dbReference type="InterPro" id="IPR022839">
    <property type="entry name" value="ArnT_tfrase"/>
</dbReference>
<dbReference type="InterPro" id="IPR003342">
    <property type="entry name" value="Glyco_trans_39/83"/>
</dbReference>
<dbReference type="InterPro" id="IPR050297">
    <property type="entry name" value="LipidA_mod_glycosyltrf_83"/>
</dbReference>
<dbReference type="NCBIfam" id="NF009784">
    <property type="entry name" value="PRK13279.1"/>
    <property type="match status" value="1"/>
</dbReference>
<dbReference type="PANTHER" id="PTHR33908">
    <property type="entry name" value="MANNOSYLTRANSFERASE YKCB-RELATED"/>
    <property type="match status" value="1"/>
</dbReference>
<dbReference type="PANTHER" id="PTHR33908:SF3">
    <property type="entry name" value="UNDECAPRENYL PHOSPHATE-ALPHA-4-AMINO-4-DEOXY-L-ARABINOSE ARABINOSYL TRANSFERASE"/>
    <property type="match status" value="1"/>
</dbReference>
<dbReference type="Pfam" id="PF02366">
    <property type="entry name" value="PMT"/>
    <property type="match status" value="1"/>
</dbReference>
<proteinExistence type="inferred from homology"/>
<protein>
    <recommendedName>
        <fullName evidence="1">Undecaprenyl phosphate-alpha-4-amino-4-deoxy-L-arabinose arabinosyl transferase</fullName>
        <ecNumber evidence="1">2.4.2.43</ecNumber>
    </recommendedName>
    <alternativeName>
        <fullName evidence="1">4-amino-4-deoxy-L-arabinose lipid A transferase</fullName>
    </alternativeName>
    <alternativeName>
        <fullName evidence="1">Lipid IV(A) 4-amino-4-deoxy-L-arabinosyltransferase</fullName>
    </alternativeName>
    <alternativeName>
        <fullName evidence="1">Undecaprenyl phosphate-alpha-L-Ara4N transferase</fullName>
    </alternativeName>
</protein>
<name>ARNT_SALPA</name>